<accession>Q0I2G8</accession>
<gene>
    <name evidence="1" type="primary">plsB</name>
    <name type="ordered locus">HS_0385</name>
</gene>
<keyword id="KW-0012">Acyltransferase</keyword>
<keyword id="KW-0997">Cell inner membrane</keyword>
<keyword id="KW-1003">Cell membrane</keyword>
<keyword id="KW-0444">Lipid biosynthesis</keyword>
<keyword id="KW-0443">Lipid metabolism</keyword>
<keyword id="KW-0472">Membrane</keyword>
<keyword id="KW-0594">Phospholipid biosynthesis</keyword>
<keyword id="KW-1208">Phospholipid metabolism</keyword>
<keyword id="KW-0808">Transferase</keyword>
<feature type="chain" id="PRO_1000049436" description="Glycerol-3-phosphate acyltransferase">
    <location>
        <begin position="1"/>
        <end position="811"/>
    </location>
</feature>
<feature type="short sequence motif" description="HXXXXD motif">
    <location>
        <begin position="305"/>
        <end position="310"/>
    </location>
</feature>
<evidence type="ECO:0000255" key="1">
    <source>
        <dbReference type="HAMAP-Rule" id="MF_00393"/>
    </source>
</evidence>
<comment type="catalytic activity">
    <reaction evidence="1">
        <text>sn-glycerol 3-phosphate + an acyl-CoA = a 1-acyl-sn-glycero-3-phosphate + CoA</text>
        <dbReference type="Rhea" id="RHEA:15325"/>
        <dbReference type="ChEBI" id="CHEBI:57287"/>
        <dbReference type="ChEBI" id="CHEBI:57597"/>
        <dbReference type="ChEBI" id="CHEBI:57970"/>
        <dbReference type="ChEBI" id="CHEBI:58342"/>
        <dbReference type="EC" id="2.3.1.15"/>
    </reaction>
</comment>
<comment type="pathway">
    <text evidence="1">Phospholipid metabolism; CDP-diacylglycerol biosynthesis; CDP-diacylglycerol from sn-glycerol 3-phosphate: step 1/3.</text>
</comment>
<comment type="subcellular location">
    <subcellularLocation>
        <location evidence="1">Cell inner membrane</location>
        <topology evidence="1">Peripheral membrane protein</topology>
        <orientation evidence="1">Cytoplasmic side</orientation>
    </subcellularLocation>
</comment>
<comment type="domain">
    <text evidence="1">The HXXXXD motif is essential for acyltransferase activity and may constitute the binding site for the phosphate moiety of the glycerol-3-phosphate.</text>
</comment>
<comment type="similarity">
    <text evidence="1">Belongs to the GPAT/DAPAT family.</text>
</comment>
<reference key="1">
    <citation type="journal article" date="2007" name="J. Bacteriol.">
        <title>Complete genome sequence of Haemophilus somnus (Histophilus somni) strain 129Pt and comparison to Haemophilus ducreyi 35000HP and Haemophilus influenzae Rd.</title>
        <authorList>
            <person name="Challacombe J.F."/>
            <person name="Duncan A.J."/>
            <person name="Brettin T.S."/>
            <person name="Bruce D."/>
            <person name="Chertkov O."/>
            <person name="Detter J.C."/>
            <person name="Han C.S."/>
            <person name="Misra M."/>
            <person name="Richardson P."/>
            <person name="Tapia R."/>
            <person name="Thayer N."/>
            <person name="Xie G."/>
            <person name="Inzana T.J."/>
        </authorList>
    </citation>
    <scope>NUCLEOTIDE SEQUENCE [LARGE SCALE GENOMIC DNA]</scope>
    <source>
        <strain>129Pt</strain>
    </source>
</reference>
<name>PLSB_HISS1</name>
<protein>
    <recommendedName>
        <fullName evidence="1">Glycerol-3-phosphate acyltransferase</fullName>
        <shortName evidence="1">GPAT</shortName>
        <ecNumber evidence="1">2.3.1.15</ecNumber>
    </recommendedName>
</protein>
<organism>
    <name type="scientific">Histophilus somni (strain 129Pt)</name>
    <name type="common">Haemophilus somnus</name>
    <dbReference type="NCBI Taxonomy" id="205914"/>
    <lineage>
        <taxon>Bacteria</taxon>
        <taxon>Pseudomonadati</taxon>
        <taxon>Pseudomonadota</taxon>
        <taxon>Gammaproteobacteria</taxon>
        <taxon>Pasteurellales</taxon>
        <taxon>Pasteurellaceae</taxon>
        <taxon>Histophilus</taxon>
    </lineage>
</organism>
<proteinExistence type="inferred from homology"/>
<dbReference type="EC" id="2.3.1.15" evidence="1"/>
<dbReference type="EMBL" id="CP000436">
    <property type="protein sequence ID" value="ABI24663.1"/>
    <property type="molecule type" value="Genomic_DNA"/>
</dbReference>
<dbReference type="SMR" id="Q0I2G8"/>
<dbReference type="KEGG" id="hso:HS_0385"/>
<dbReference type="eggNOG" id="COG2937">
    <property type="taxonomic scope" value="Bacteria"/>
</dbReference>
<dbReference type="HOGENOM" id="CLU_015407_0_0_6"/>
<dbReference type="UniPathway" id="UPA00557">
    <property type="reaction ID" value="UER00612"/>
</dbReference>
<dbReference type="GO" id="GO:0005886">
    <property type="term" value="C:plasma membrane"/>
    <property type="evidence" value="ECO:0007669"/>
    <property type="project" value="UniProtKB-SubCell"/>
</dbReference>
<dbReference type="GO" id="GO:0004366">
    <property type="term" value="F:glycerol-3-phosphate O-acyltransferase activity"/>
    <property type="evidence" value="ECO:0007669"/>
    <property type="project" value="UniProtKB-UniRule"/>
</dbReference>
<dbReference type="GO" id="GO:0016024">
    <property type="term" value="P:CDP-diacylglycerol biosynthetic process"/>
    <property type="evidence" value="ECO:0007669"/>
    <property type="project" value="UniProtKB-UniRule"/>
</dbReference>
<dbReference type="GO" id="GO:0006631">
    <property type="term" value="P:fatty acid metabolic process"/>
    <property type="evidence" value="ECO:0007669"/>
    <property type="project" value="TreeGrafter"/>
</dbReference>
<dbReference type="CDD" id="cd07993">
    <property type="entry name" value="LPLAT_DHAPAT-like"/>
    <property type="match status" value="1"/>
</dbReference>
<dbReference type="HAMAP" id="MF_00393">
    <property type="entry name" value="Glyc3P_acyltrans"/>
    <property type="match status" value="1"/>
</dbReference>
<dbReference type="InterPro" id="IPR022284">
    <property type="entry name" value="GPAT/DHAPAT"/>
</dbReference>
<dbReference type="InterPro" id="IPR045520">
    <property type="entry name" value="GPAT/DHAPAT_C"/>
</dbReference>
<dbReference type="InterPro" id="IPR041728">
    <property type="entry name" value="GPAT/DHAPAT_LPLAT"/>
</dbReference>
<dbReference type="InterPro" id="IPR028354">
    <property type="entry name" value="GPAT_PlsB"/>
</dbReference>
<dbReference type="InterPro" id="IPR002123">
    <property type="entry name" value="Plipid/glycerol_acylTrfase"/>
</dbReference>
<dbReference type="NCBIfam" id="TIGR03703">
    <property type="entry name" value="plsB"/>
    <property type="match status" value="1"/>
</dbReference>
<dbReference type="NCBIfam" id="NF003441">
    <property type="entry name" value="PRK04974.1"/>
    <property type="match status" value="1"/>
</dbReference>
<dbReference type="PANTHER" id="PTHR12563:SF17">
    <property type="entry name" value="DIHYDROXYACETONE PHOSPHATE ACYLTRANSFERASE"/>
    <property type="match status" value="1"/>
</dbReference>
<dbReference type="PANTHER" id="PTHR12563">
    <property type="entry name" value="GLYCEROL-3-PHOSPHATE ACYLTRANSFERASE"/>
    <property type="match status" value="1"/>
</dbReference>
<dbReference type="Pfam" id="PF01553">
    <property type="entry name" value="Acyltransferase"/>
    <property type="match status" value="1"/>
</dbReference>
<dbReference type="Pfam" id="PF19277">
    <property type="entry name" value="GPAT_C"/>
    <property type="match status" value="1"/>
</dbReference>
<dbReference type="PIRSF" id="PIRSF500064">
    <property type="entry name" value="GPAT"/>
    <property type="match status" value="1"/>
</dbReference>
<dbReference type="PIRSF" id="PIRSF000437">
    <property type="entry name" value="GPAT_DHAPAT"/>
    <property type="match status" value="1"/>
</dbReference>
<dbReference type="SMART" id="SM00563">
    <property type="entry name" value="PlsC"/>
    <property type="match status" value="1"/>
</dbReference>
<dbReference type="SUPFAM" id="SSF69593">
    <property type="entry name" value="Glycerol-3-phosphate (1)-acyltransferase"/>
    <property type="match status" value="1"/>
</dbReference>
<sequence length="811" mass="92687">MSSILNFYRNLLSVPLSFLVKNNPIPQQPIEELSLDISQPIIYLLPYTSQTDLIIIRKNCLSVGLPDPLEENELGGQCLPRYVFLDEGRRFFKSKGAKSATIQIVEKYLELHRSLPDLNVQLVPVSVLWGRSPGHEKQVGLPKLRLLNSIQKTAVAIWFGRDTFVRFSQAVSLRYMADEYGTDASIALKLARVAKIHFAKQRMSATGPRLPNRQAMFNKLLQSPAILNAIADEAKSKRISKEKARKEAYKILDEIAANVNYEGLRVADRFLGWLWNKLYQGIDVQNAERVRKLALEGHEIVYIPCHRSHIDYLLLSYVLYHQGLVPPHIAAGINLNFWPVGMMFRRGGAFFIRRTFKGNRLYSTIFREYLAELFHRGYSVEFFIEGGRSRTGRLLAPKTGMMSMTVQALQQNQIRPISVVPVYVGYEHVLEVDTYAKELRGAAKEKENAGLVLRVIRKLRNLGQGYVNFAEPITLSNYLNQHFPEWKDSQLEEHSQWFNPAVNAISNQVMININKAAAINAMNLTGTALLSSRQRALSREQLLEQLKSYQRFLQHAPYSNDIIVPTDTPEEILTHVLNLERVGLIVEKDNFGEMLRLERSAAVLMTYYRNNIQHVFVLPSLIASIIFHHGAIQKELVSNAARKIYPFLKEELFLHFSQDELDEYVEKIIEEFTRQKLILCAENLLSINKERVRVLQLWMAGVREILQRYYITVSILQDTPNIAKATLEKESQSIAQRLSVLHGINAPEFFDKAVFSAFIGSLRSNGYFDKNGVAITEKLNDISDILDRIISTEVQLTIKSAVGKHEEVQEY</sequence>